<comment type="subunit">
    <text evidence="1">May form a heterooligomeric complex that consists of seven subunits: mnhA2, mnhB2, mnhC2, mnhD2, mnhE2, mnhF2 and mnhG2.</text>
</comment>
<comment type="subcellular location">
    <subcellularLocation>
        <location evidence="3">Cell membrane</location>
        <topology evidence="3">Multi-pass membrane protein</topology>
    </subcellularLocation>
</comment>
<comment type="similarity">
    <text evidence="3">Belongs to the CPA3 antiporters (TC 2.A.63) subunit F family.</text>
</comment>
<feature type="chain" id="PRO_0000372205" description="Putative antiporter subunit mnhF2">
    <location>
        <begin position="1"/>
        <end position="100"/>
    </location>
</feature>
<feature type="transmembrane region" description="Helical" evidence="2">
    <location>
        <begin position="5"/>
        <end position="25"/>
    </location>
</feature>
<feature type="transmembrane region" description="Helical" evidence="2">
    <location>
        <begin position="38"/>
        <end position="60"/>
    </location>
</feature>
<feature type="transmembrane region" description="Helical" evidence="2">
    <location>
        <begin position="65"/>
        <end position="87"/>
    </location>
</feature>
<gene>
    <name type="primary">mnhF2</name>
    <name type="synonym">mrpF2</name>
    <name type="ordered locus">SE_0402</name>
</gene>
<reference key="1">
    <citation type="journal article" date="2003" name="Mol. Microbiol.">
        <title>Genome-based analysis of virulence genes in a non-biofilm-forming Staphylococcus epidermidis strain (ATCC 12228).</title>
        <authorList>
            <person name="Zhang Y.-Q."/>
            <person name="Ren S.-X."/>
            <person name="Li H.-L."/>
            <person name="Wang Y.-X."/>
            <person name="Fu G."/>
            <person name="Yang J."/>
            <person name="Qin Z.-Q."/>
            <person name="Miao Y.-G."/>
            <person name="Wang W.-Y."/>
            <person name="Chen R.-S."/>
            <person name="Shen Y."/>
            <person name="Chen Z."/>
            <person name="Yuan Z.-H."/>
            <person name="Zhao G.-P."/>
            <person name="Qu D."/>
            <person name="Danchin A."/>
            <person name="Wen Y.-M."/>
        </authorList>
    </citation>
    <scope>NUCLEOTIDE SEQUENCE [LARGE SCALE GENOMIC DNA]</scope>
    <source>
        <strain>ATCC 12228 / FDA PCI 1200</strain>
    </source>
</reference>
<name>MNHF2_STAES</name>
<organism>
    <name type="scientific">Staphylococcus epidermidis (strain ATCC 12228 / FDA PCI 1200)</name>
    <dbReference type="NCBI Taxonomy" id="176280"/>
    <lineage>
        <taxon>Bacteria</taxon>
        <taxon>Bacillati</taxon>
        <taxon>Bacillota</taxon>
        <taxon>Bacilli</taxon>
        <taxon>Bacillales</taxon>
        <taxon>Staphylococcaceae</taxon>
        <taxon>Staphylococcus</taxon>
    </lineage>
</organism>
<evidence type="ECO:0000250" key="1"/>
<evidence type="ECO:0000255" key="2"/>
<evidence type="ECO:0000305" key="3"/>
<keyword id="KW-0050">Antiport</keyword>
<keyword id="KW-1003">Cell membrane</keyword>
<keyword id="KW-0406">Ion transport</keyword>
<keyword id="KW-0472">Membrane</keyword>
<keyword id="KW-0812">Transmembrane</keyword>
<keyword id="KW-1133">Transmembrane helix</keyword>
<keyword id="KW-0813">Transport</keyword>
<protein>
    <recommendedName>
        <fullName>Putative antiporter subunit mnhF2</fullName>
    </recommendedName>
    <alternativeName>
        <fullName>Mrp complex subunit F2</fullName>
    </alternativeName>
    <alternativeName>
        <fullName>Putative NADH-ubiquinone oxidoreductase subunit mnhF2</fullName>
    </alternativeName>
</protein>
<sequence>MIEMFTQIFIISALVIFGMALLVCLVRLIKGPTTADRVVSFDASSAVVMSIVGVMSVIFNSVSYLDSIMLIAIISFVSSVSISRFIGEGRVFNGNHKRHR</sequence>
<proteinExistence type="inferred from homology"/>
<dbReference type="EMBL" id="AE015929">
    <property type="protein sequence ID" value="AAO03999.1"/>
    <property type="molecule type" value="Genomic_DNA"/>
</dbReference>
<dbReference type="RefSeq" id="NP_763957.1">
    <property type="nucleotide sequence ID" value="NC_004461.1"/>
</dbReference>
<dbReference type="RefSeq" id="WP_001832031.1">
    <property type="nucleotide sequence ID" value="NZ_WBME01000020.1"/>
</dbReference>
<dbReference type="SMR" id="Q8CQ45"/>
<dbReference type="GeneID" id="50019441"/>
<dbReference type="KEGG" id="sep:SE_0402"/>
<dbReference type="PATRIC" id="fig|176280.10.peg.376"/>
<dbReference type="eggNOG" id="COG2212">
    <property type="taxonomic scope" value="Bacteria"/>
</dbReference>
<dbReference type="HOGENOM" id="CLU_125825_1_3_9"/>
<dbReference type="OrthoDB" id="9799958at2"/>
<dbReference type="Proteomes" id="UP000001411">
    <property type="component" value="Chromosome"/>
</dbReference>
<dbReference type="GO" id="GO:0005886">
    <property type="term" value="C:plasma membrane"/>
    <property type="evidence" value="ECO:0007669"/>
    <property type="project" value="UniProtKB-SubCell"/>
</dbReference>
<dbReference type="GO" id="GO:0015385">
    <property type="term" value="F:sodium:proton antiporter activity"/>
    <property type="evidence" value="ECO:0007669"/>
    <property type="project" value="TreeGrafter"/>
</dbReference>
<dbReference type="InterPro" id="IPR007208">
    <property type="entry name" value="MrpF/PhaF-like"/>
</dbReference>
<dbReference type="NCBIfam" id="NF009300">
    <property type="entry name" value="PRK12657.1"/>
    <property type="match status" value="1"/>
</dbReference>
<dbReference type="PANTHER" id="PTHR34702">
    <property type="entry name" value="NA(+)/H(+) ANTIPORTER SUBUNIT F1"/>
    <property type="match status" value="1"/>
</dbReference>
<dbReference type="PANTHER" id="PTHR34702:SF1">
    <property type="entry name" value="NA(+)_H(+) ANTIPORTER SUBUNIT F"/>
    <property type="match status" value="1"/>
</dbReference>
<dbReference type="Pfam" id="PF04066">
    <property type="entry name" value="MrpF_PhaF"/>
    <property type="match status" value="1"/>
</dbReference>
<dbReference type="PIRSF" id="PIRSF028784">
    <property type="entry name" value="MrpF"/>
    <property type="match status" value="1"/>
</dbReference>
<accession>Q8CQ45</accession>